<dbReference type="EMBL" id="HF679025">
    <property type="protein sequence ID" value="CCT65289.1"/>
    <property type="molecule type" value="Genomic_DNA"/>
</dbReference>
<dbReference type="SMR" id="S0DRT4"/>
<dbReference type="STRING" id="1279085.S0DRT4"/>
<dbReference type="EnsemblFungi" id="CCT65289">
    <property type="protein sequence ID" value="CCT65289"/>
    <property type="gene ID" value="FFUJ_02222"/>
</dbReference>
<dbReference type="VEuPathDB" id="FungiDB:FFUJ_02222"/>
<dbReference type="HOGENOM" id="CLU_047997_0_0_1"/>
<dbReference type="Proteomes" id="UP000016800">
    <property type="component" value="Chromosome 3"/>
</dbReference>
<dbReference type="GO" id="GO:0005634">
    <property type="term" value="C:nucleus"/>
    <property type="evidence" value="ECO:0007669"/>
    <property type="project" value="UniProtKB-SubCell"/>
</dbReference>
<dbReference type="GO" id="GO:0003677">
    <property type="term" value="F:DNA binding"/>
    <property type="evidence" value="ECO:0007669"/>
    <property type="project" value="UniProtKB-KW"/>
</dbReference>
<dbReference type="GO" id="GO:0000981">
    <property type="term" value="F:DNA-binding transcription factor activity, RNA polymerase II-specific"/>
    <property type="evidence" value="ECO:0007669"/>
    <property type="project" value="InterPro"/>
</dbReference>
<dbReference type="GO" id="GO:0008270">
    <property type="term" value="F:zinc ion binding"/>
    <property type="evidence" value="ECO:0007669"/>
    <property type="project" value="InterPro"/>
</dbReference>
<dbReference type="CDD" id="cd00067">
    <property type="entry name" value="GAL4"/>
    <property type="match status" value="1"/>
</dbReference>
<dbReference type="Gene3D" id="4.10.240.10">
    <property type="entry name" value="Zn(2)-C6 fungal-type DNA-binding domain"/>
    <property type="match status" value="1"/>
</dbReference>
<dbReference type="InterPro" id="IPR036864">
    <property type="entry name" value="Zn2-C6_fun-type_DNA-bd_sf"/>
</dbReference>
<dbReference type="InterPro" id="IPR001138">
    <property type="entry name" value="Zn2Cys6_DnaBD"/>
</dbReference>
<dbReference type="SMART" id="SM00066">
    <property type="entry name" value="GAL4"/>
    <property type="match status" value="1"/>
</dbReference>
<dbReference type="SUPFAM" id="SSF57701">
    <property type="entry name" value="Zn2/Cys6 DNA-binding domain"/>
    <property type="match status" value="1"/>
</dbReference>
<dbReference type="PROSITE" id="PS50048">
    <property type="entry name" value="ZN2_CY6_FUNGAL_2"/>
    <property type="match status" value="1"/>
</dbReference>
<accession>S0DRT4</accession>
<name>EQXR_GIBF5</name>
<evidence type="ECO:0000255" key="1">
    <source>
        <dbReference type="PROSITE-ProRule" id="PRU00227"/>
    </source>
</evidence>
<evidence type="ECO:0000256" key="2">
    <source>
        <dbReference type="SAM" id="MobiDB-lite"/>
    </source>
</evidence>
<evidence type="ECO:0000269" key="3">
    <source>
    </source>
</evidence>
<evidence type="ECO:0000303" key="4">
    <source>
    </source>
</evidence>
<gene>
    <name evidence="4" type="primary">TF22</name>
    <name type="ORF">FFUJ_02222</name>
</gene>
<reference key="1">
    <citation type="journal article" date="2013" name="PLoS Pathog.">
        <title>Deciphering the cryptic genome: genome-wide analyses of the rice pathogen Fusarium fujikuroi reveal complex regulation of secondary metabolism and novel metabolites.</title>
        <authorList>
            <person name="Wiemann P."/>
            <person name="Sieber C.M.K."/>
            <person name="von Bargen K.W."/>
            <person name="Studt L."/>
            <person name="Niehaus E.-M."/>
            <person name="Espino J.J."/>
            <person name="Huss K."/>
            <person name="Michielse C.B."/>
            <person name="Albermann S."/>
            <person name="Wagner D."/>
            <person name="Bergner S.V."/>
            <person name="Connolly L.R."/>
            <person name="Fischer A."/>
            <person name="Reuter G."/>
            <person name="Kleigrewe K."/>
            <person name="Bald T."/>
            <person name="Wingfield B.D."/>
            <person name="Ophir R."/>
            <person name="Freeman S."/>
            <person name="Hippler M."/>
            <person name="Smith K.M."/>
            <person name="Brown D.W."/>
            <person name="Proctor R.H."/>
            <person name="Muensterkoetter M."/>
            <person name="Freitag M."/>
            <person name="Humpf H.-U."/>
            <person name="Gueldener U."/>
            <person name="Tudzynski B."/>
        </authorList>
    </citation>
    <scope>NUCLEOTIDE SEQUENCE [LARGE SCALE GENOMIC DNA]</scope>
    <source>
        <strain>CBS 195.34 / IMI 58289 / NRRL A-6831</strain>
    </source>
</reference>
<reference key="2">
    <citation type="journal article" date="2017" name="Toxins">
        <title>Establishment of the inducible Tet-On system for the activation of the silent trichosetin gene cluster in Fusarium fujikuroi.</title>
        <authorList>
            <person name="Janevska S."/>
            <person name="Arndt B."/>
            <person name="Baumann L."/>
            <person name="Apken L.H."/>
            <person name="Mauriz Marques L.M."/>
            <person name="Humpf H.U."/>
            <person name="Tudzynski B."/>
        </authorList>
    </citation>
    <scope>FUNCTION</scope>
</reference>
<organism>
    <name type="scientific">Gibberella fujikuroi (strain CBS 195.34 / IMI 58289 / NRRL A-6831)</name>
    <name type="common">Bakanae and foot rot disease fungus</name>
    <name type="synonym">Fusarium fujikuroi</name>
    <dbReference type="NCBI Taxonomy" id="1279085"/>
    <lineage>
        <taxon>Eukaryota</taxon>
        <taxon>Fungi</taxon>
        <taxon>Dikarya</taxon>
        <taxon>Ascomycota</taxon>
        <taxon>Pezizomycotina</taxon>
        <taxon>Sordariomycetes</taxon>
        <taxon>Hypocreomycetidae</taxon>
        <taxon>Hypocreales</taxon>
        <taxon>Nectriaceae</taxon>
        <taxon>Fusarium</taxon>
        <taxon>Fusarium fujikuroi species complex</taxon>
    </lineage>
</organism>
<feature type="chain" id="PRO_0000443990" description="Trichosetin biosynthesis cluster transcription factor TF22">
    <location>
        <begin position="1"/>
        <end position="454"/>
    </location>
</feature>
<feature type="DNA-binding region" description="Zn(2)-C6 fungal-type" evidence="1">
    <location>
        <begin position="13"/>
        <end position="47"/>
    </location>
</feature>
<feature type="region of interest" description="Disordered" evidence="2">
    <location>
        <begin position="51"/>
        <end position="89"/>
    </location>
</feature>
<feature type="compositionally biased region" description="Polar residues" evidence="2">
    <location>
        <begin position="52"/>
        <end position="61"/>
    </location>
</feature>
<feature type="compositionally biased region" description="Basic and acidic residues" evidence="2">
    <location>
        <begin position="63"/>
        <end position="74"/>
    </location>
</feature>
<sequence>MSTRNSQSIRSSCDRCRSHKLKCTVSPEDSRSGPHKCTRCIRAQVTCVFGPRSQSKRTPNGKNKPEKPKPELEPPQKTSPPVCSSSLAGMDLGSPGAWTPWIDDLASQETEEPLPIDVNTAGDGSGPSDGDFWADLGMTQELNMLELAPTNTYQAQYLASFDYVAPPVAEVGHLMDISEPSEHTPPHAIVQLSTLVTKIHETSKALEESPWSNVPDAKQLQNYPIGRVLSLSQDFCSILGCIWGKVSISSDGQSSGSGSSPTPSADMLDYAEVLSSIKITQDPTASSSMAASVDMPTALLVLSCYTSLIKLYSLVFAHFENHLSHLPEIPSPYPSQAALASHRWGLQLGELPSADETCTKICTAVQVLLDAFQSVEDVFGLPRSFSAVRQRTCDMEGMDFSAELGRTSLWTDYMVHFVVRSNAIRADTEECEEMRELSTKVRSLKALIREKMNL</sequence>
<proteinExistence type="inferred from homology"/>
<protein>
    <recommendedName>
        <fullName evidence="4">Trichosetin biosynthesis cluster transcription factor TF22</fullName>
    </recommendedName>
</protein>
<keyword id="KW-0010">Activator</keyword>
<keyword id="KW-0238">DNA-binding</keyword>
<keyword id="KW-0479">Metal-binding</keyword>
<keyword id="KW-0539">Nucleus</keyword>
<keyword id="KW-1185">Reference proteome</keyword>
<keyword id="KW-0804">Transcription</keyword>
<keyword id="KW-0805">Transcription regulation</keyword>
<keyword id="KW-0862">Zinc</keyword>
<comment type="function">
    <text evidence="3">Transcription factor that regulates the expression of the gene cluster that mediates the biosynthesis of trichosetin, a trans-fused decalin-containing tetramic acid with antimicrobial activity (PubMed:28379186). Directly activates expression of only the three biosynthetic genes PKS-NRPS1, DA and ER, while TF23 and MFS-T are induced by the final product trichosetin and not by TF22 (PubMed:28379186).</text>
</comment>
<comment type="subcellular location">
    <subcellularLocation>
        <location evidence="1">Nucleus</location>
    </subcellularLocation>
</comment>